<reference key="1">
    <citation type="journal article" date="2008" name="J. Bacteriol.">
        <title>Genome sequence of Lactobacillus helveticus: an organism distinguished by selective gene loss and IS element expansion.</title>
        <authorList>
            <person name="Callanan M."/>
            <person name="Kaleta P."/>
            <person name="O'Callaghan J."/>
            <person name="O'Sullivan O."/>
            <person name="Jordan K."/>
            <person name="McAuliffe O."/>
            <person name="Sangrador-Vegas A."/>
            <person name="Slattery L."/>
            <person name="Fitzgerald G.F."/>
            <person name="Beresford T."/>
            <person name="Ross R.P."/>
        </authorList>
    </citation>
    <scope>NUCLEOTIDE SEQUENCE [LARGE SCALE GENOMIC DNA]</scope>
    <source>
        <strain>DPC 4571</strain>
    </source>
</reference>
<proteinExistence type="inferred from homology"/>
<organism>
    <name type="scientific">Lactobacillus helveticus (strain DPC 4571)</name>
    <dbReference type="NCBI Taxonomy" id="405566"/>
    <lineage>
        <taxon>Bacteria</taxon>
        <taxon>Bacillati</taxon>
        <taxon>Bacillota</taxon>
        <taxon>Bacilli</taxon>
        <taxon>Lactobacillales</taxon>
        <taxon>Lactobacillaceae</taxon>
        <taxon>Lactobacillus</taxon>
    </lineage>
</organism>
<sequence>MAKITLDEAKKEAASLRTKLDEWADAYYSKDAPEVEDNVYDQSYNRLLELEKAFPEIVTPDSITQRVGGEIDSDFTKVNHPIPMLSMGDVFSKDELKEFDQRMQKLVGHPVEYNVELKIDGLSLSLEYQDGKLVRASTRGNGYIGEDVTANARYIADIPQVLPEPLTIEVRGECYMGKEAFAKLNQEREDEGLSVFANPRNAAAGSLRQLDPKVTKKRQLSTFIYTWVNPPREITSQHQAIERMHELGFHTNETGRKLANLDEVFDFIDEYTAKRNSLTYGIDGIVLKVDDLSLEQQLGNTVKVPRWEIAYKFPPEEQETIVRDIVWTVGRTGVVTPTAVMDPVQLAGTTVARASLHNPDYLNEKGVRIGDTVKLHKAGDIIPEISEVVLSKRPADSVPYEIPTTCPSCGQKLVHLEDEVALRCINPSCPAQVEEGIIHFASRPAMNIAGLGPKIVKQLIAKDLVHNVADLYHLTEDDLAQLDHFKEKSINNLLTAIDNSKKNSVELLITGLGIDHVGAKAARLIAQKFKNLEKIMSLGVQDIASIDTIGMTTAESMTTYFAQPEAQKLIEELRESGLNMDYLGADEPEEAPDNPFKDKTVVLTGKLEHYTRSEFTKKLQALGAKVTGSVSHKTDYVIYGKDAGSKYNKAEQLGVPLLTEEEAIAQIE</sequence>
<accession>A8YTZ3</accession>
<name>DNLJ_LACH4</name>
<dbReference type="EC" id="6.5.1.2" evidence="1"/>
<dbReference type="EMBL" id="CP000517">
    <property type="protein sequence ID" value="ABX26731.1"/>
    <property type="molecule type" value="Genomic_DNA"/>
</dbReference>
<dbReference type="RefSeq" id="WP_012211516.1">
    <property type="nucleotide sequence ID" value="NC_010080.1"/>
</dbReference>
<dbReference type="SMR" id="A8YTZ3"/>
<dbReference type="KEGG" id="lhe:lhv_0551"/>
<dbReference type="eggNOG" id="COG0272">
    <property type="taxonomic scope" value="Bacteria"/>
</dbReference>
<dbReference type="HOGENOM" id="CLU_007764_2_1_9"/>
<dbReference type="Proteomes" id="UP000000790">
    <property type="component" value="Chromosome"/>
</dbReference>
<dbReference type="GO" id="GO:0005829">
    <property type="term" value="C:cytosol"/>
    <property type="evidence" value="ECO:0007669"/>
    <property type="project" value="TreeGrafter"/>
</dbReference>
<dbReference type="GO" id="GO:0003911">
    <property type="term" value="F:DNA ligase (NAD+) activity"/>
    <property type="evidence" value="ECO:0007669"/>
    <property type="project" value="UniProtKB-UniRule"/>
</dbReference>
<dbReference type="GO" id="GO:0046872">
    <property type="term" value="F:metal ion binding"/>
    <property type="evidence" value="ECO:0007669"/>
    <property type="project" value="UniProtKB-KW"/>
</dbReference>
<dbReference type="GO" id="GO:0006281">
    <property type="term" value="P:DNA repair"/>
    <property type="evidence" value="ECO:0007669"/>
    <property type="project" value="UniProtKB-KW"/>
</dbReference>
<dbReference type="GO" id="GO:0006260">
    <property type="term" value="P:DNA replication"/>
    <property type="evidence" value="ECO:0007669"/>
    <property type="project" value="UniProtKB-KW"/>
</dbReference>
<dbReference type="CDD" id="cd17748">
    <property type="entry name" value="BRCT_DNA_ligase_like"/>
    <property type="match status" value="1"/>
</dbReference>
<dbReference type="CDD" id="cd00114">
    <property type="entry name" value="LIGANc"/>
    <property type="match status" value="1"/>
</dbReference>
<dbReference type="FunFam" id="1.10.150.20:FF:000007">
    <property type="entry name" value="DNA ligase"/>
    <property type="match status" value="1"/>
</dbReference>
<dbReference type="FunFam" id="2.40.50.140:FF:000012">
    <property type="entry name" value="DNA ligase"/>
    <property type="match status" value="1"/>
</dbReference>
<dbReference type="FunFam" id="3.30.470.30:FF:000001">
    <property type="entry name" value="DNA ligase"/>
    <property type="match status" value="1"/>
</dbReference>
<dbReference type="Gene3D" id="6.20.10.30">
    <property type="match status" value="1"/>
</dbReference>
<dbReference type="Gene3D" id="1.10.150.20">
    <property type="entry name" value="5' to 3' exonuclease, C-terminal subdomain"/>
    <property type="match status" value="2"/>
</dbReference>
<dbReference type="Gene3D" id="3.40.50.10190">
    <property type="entry name" value="BRCT domain"/>
    <property type="match status" value="1"/>
</dbReference>
<dbReference type="Gene3D" id="3.30.470.30">
    <property type="entry name" value="DNA ligase/mRNA capping enzyme"/>
    <property type="match status" value="1"/>
</dbReference>
<dbReference type="Gene3D" id="1.10.287.610">
    <property type="entry name" value="Helix hairpin bin"/>
    <property type="match status" value="1"/>
</dbReference>
<dbReference type="Gene3D" id="2.40.50.140">
    <property type="entry name" value="Nucleic acid-binding proteins"/>
    <property type="match status" value="1"/>
</dbReference>
<dbReference type="HAMAP" id="MF_01588">
    <property type="entry name" value="DNA_ligase_A"/>
    <property type="match status" value="1"/>
</dbReference>
<dbReference type="InterPro" id="IPR001357">
    <property type="entry name" value="BRCT_dom"/>
</dbReference>
<dbReference type="InterPro" id="IPR036420">
    <property type="entry name" value="BRCT_dom_sf"/>
</dbReference>
<dbReference type="InterPro" id="IPR041663">
    <property type="entry name" value="DisA/LigA_HHH"/>
</dbReference>
<dbReference type="InterPro" id="IPR001679">
    <property type="entry name" value="DNA_ligase"/>
</dbReference>
<dbReference type="InterPro" id="IPR018239">
    <property type="entry name" value="DNA_ligase_AS"/>
</dbReference>
<dbReference type="InterPro" id="IPR033136">
    <property type="entry name" value="DNA_ligase_CS"/>
</dbReference>
<dbReference type="InterPro" id="IPR013839">
    <property type="entry name" value="DNAligase_adenylation"/>
</dbReference>
<dbReference type="InterPro" id="IPR013840">
    <property type="entry name" value="DNAligase_N"/>
</dbReference>
<dbReference type="InterPro" id="IPR012340">
    <property type="entry name" value="NA-bd_OB-fold"/>
</dbReference>
<dbReference type="InterPro" id="IPR004150">
    <property type="entry name" value="NAD_DNA_ligase_OB"/>
</dbReference>
<dbReference type="InterPro" id="IPR010994">
    <property type="entry name" value="RuvA_2-like"/>
</dbReference>
<dbReference type="InterPro" id="IPR004149">
    <property type="entry name" value="Znf_DNAligase_C4"/>
</dbReference>
<dbReference type="NCBIfam" id="TIGR00575">
    <property type="entry name" value="dnlj"/>
    <property type="match status" value="1"/>
</dbReference>
<dbReference type="NCBIfam" id="NF005932">
    <property type="entry name" value="PRK07956.1"/>
    <property type="match status" value="1"/>
</dbReference>
<dbReference type="PANTHER" id="PTHR23389">
    <property type="entry name" value="CHROMOSOME TRANSMISSION FIDELITY FACTOR 18"/>
    <property type="match status" value="1"/>
</dbReference>
<dbReference type="PANTHER" id="PTHR23389:SF9">
    <property type="entry name" value="DNA LIGASE"/>
    <property type="match status" value="1"/>
</dbReference>
<dbReference type="Pfam" id="PF00533">
    <property type="entry name" value="BRCT"/>
    <property type="match status" value="1"/>
</dbReference>
<dbReference type="Pfam" id="PF01653">
    <property type="entry name" value="DNA_ligase_aden"/>
    <property type="match status" value="1"/>
</dbReference>
<dbReference type="Pfam" id="PF03120">
    <property type="entry name" value="DNA_ligase_OB"/>
    <property type="match status" value="1"/>
</dbReference>
<dbReference type="Pfam" id="PF03119">
    <property type="entry name" value="DNA_ligase_ZBD"/>
    <property type="match status" value="1"/>
</dbReference>
<dbReference type="Pfam" id="PF12826">
    <property type="entry name" value="HHH_2"/>
    <property type="match status" value="1"/>
</dbReference>
<dbReference type="Pfam" id="PF14520">
    <property type="entry name" value="HHH_5"/>
    <property type="match status" value="1"/>
</dbReference>
<dbReference type="PIRSF" id="PIRSF001604">
    <property type="entry name" value="LigA"/>
    <property type="match status" value="1"/>
</dbReference>
<dbReference type="SMART" id="SM00292">
    <property type="entry name" value="BRCT"/>
    <property type="match status" value="1"/>
</dbReference>
<dbReference type="SMART" id="SM00532">
    <property type="entry name" value="LIGANc"/>
    <property type="match status" value="1"/>
</dbReference>
<dbReference type="SUPFAM" id="SSF52113">
    <property type="entry name" value="BRCT domain"/>
    <property type="match status" value="1"/>
</dbReference>
<dbReference type="SUPFAM" id="SSF56091">
    <property type="entry name" value="DNA ligase/mRNA capping enzyme, catalytic domain"/>
    <property type="match status" value="1"/>
</dbReference>
<dbReference type="SUPFAM" id="SSF50249">
    <property type="entry name" value="Nucleic acid-binding proteins"/>
    <property type="match status" value="1"/>
</dbReference>
<dbReference type="SUPFAM" id="SSF47781">
    <property type="entry name" value="RuvA domain 2-like"/>
    <property type="match status" value="1"/>
</dbReference>
<dbReference type="PROSITE" id="PS50172">
    <property type="entry name" value="BRCT"/>
    <property type="match status" value="1"/>
</dbReference>
<dbReference type="PROSITE" id="PS01055">
    <property type="entry name" value="DNA_LIGASE_N1"/>
    <property type="match status" value="1"/>
</dbReference>
<dbReference type="PROSITE" id="PS01056">
    <property type="entry name" value="DNA_LIGASE_N2"/>
    <property type="match status" value="1"/>
</dbReference>
<evidence type="ECO:0000255" key="1">
    <source>
        <dbReference type="HAMAP-Rule" id="MF_01588"/>
    </source>
</evidence>
<gene>
    <name evidence="1" type="primary">ligA</name>
    <name type="ordered locus">lhv_0551</name>
</gene>
<feature type="chain" id="PRO_0000340356" description="DNA ligase">
    <location>
        <begin position="1"/>
        <end position="668"/>
    </location>
</feature>
<feature type="domain" description="BRCT" evidence="1">
    <location>
        <begin position="591"/>
        <end position="668"/>
    </location>
</feature>
<feature type="active site" description="N6-AMP-lysine intermediate" evidence="1">
    <location>
        <position position="118"/>
    </location>
</feature>
<feature type="binding site" evidence="1">
    <location>
        <begin position="37"/>
        <end position="41"/>
    </location>
    <ligand>
        <name>NAD(+)</name>
        <dbReference type="ChEBI" id="CHEBI:57540"/>
    </ligand>
</feature>
<feature type="binding site" evidence="1">
    <location>
        <begin position="86"/>
        <end position="87"/>
    </location>
    <ligand>
        <name>NAD(+)</name>
        <dbReference type="ChEBI" id="CHEBI:57540"/>
    </ligand>
</feature>
<feature type="binding site" evidence="1">
    <location>
        <position position="116"/>
    </location>
    <ligand>
        <name>NAD(+)</name>
        <dbReference type="ChEBI" id="CHEBI:57540"/>
    </ligand>
</feature>
<feature type="binding site" evidence="1">
    <location>
        <position position="139"/>
    </location>
    <ligand>
        <name>NAD(+)</name>
        <dbReference type="ChEBI" id="CHEBI:57540"/>
    </ligand>
</feature>
<feature type="binding site" evidence="1">
    <location>
        <position position="173"/>
    </location>
    <ligand>
        <name>NAD(+)</name>
        <dbReference type="ChEBI" id="CHEBI:57540"/>
    </ligand>
</feature>
<feature type="binding site" evidence="1">
    <location>
        <position position="288"/>
    </location>
    <ligand>
        <name>NAD(+)</name>
        <dbReference type="ChEBI" id="CHEBI:57540"/>
    </ligand>
</feature>
<feature type="binding site" evidence="1">
    <location>
        <position position="312"/>
    </location>
    <ligand>
        <name>NAD(+)</name>
        <dbReference type="ChEBI" id="CHEBI:57540"/>
    </ligand>
</feature>
<feature type="binding site" evidence="1">
    <location>
        <position position="406"/>
    </location>
    <ligand>
        <name>Zn(2+)</name>
        <dbReference type="ChEBI" id="CHEBI:29105"/>
    </ligand>
</feature>
<feature type="binding site" evidence="1">
    <location>
        <position position="409"/>
    </location>
    <ligand>
        <name>Zn(2+)</name>
        <dbReference type="ChEBI" id="CHEBI:29105"/>
    </ligand>
</feature>
<feature type="binding site" evidence="1">
    <location>
        <position position="424"/>
    </location>
    <ligand>
        <name>Zn(2+)</name>
        <dbReference type="ChEBI" id="CHEBI:29105"/>
    </ligand>
</feature>
<feature type="binding site" evidence="1">
    <location>
        <position position="429"/>
    </location>
    <ligand>
        <name>Zn(2+)</name>
        <dbReference type="ChEBI" id="CHEBI:29105"/>
    </ligand>
</feature>
<comment type="function">
    <text evidence="1">DNA ligase that catalyzes the formation of phosphodiester linkages between 5'-phosphoryl and 3'-hydroxyl groups in double-stranded DNA using NAD as a coenzyme and as the energy source for the reaction. It is essential for DNA replication and repair of damaged DNA.</text>
</comment>
<comment type="catalytic activity">
    <reaction evidence="1">
        <text>NAD(+) + (deoxyribonucleotide)n-3'-hydroxyl + 5'-phospho-(deoxyribonucleotide)m = (deoxyribonucleotide)n+m + AMP + beta-nicotinamide D-nucleotide.</text>
        <dbReference type="EC" id="6.5.1.2"/>
    </reaction>
</comment>
<comment type="cofactor">
    <cofactor evidence="1">
        <name>Mg(2+)</name>
        <dbReference type="ChEBI" id="CHEBI:18420"/>
    </cofactor>
    <cofactor evidence="1">
        <name>Mn(2+)</name>
        <dbReference type="ChEBI" id="CHEBI:29035"/>
    </cofactor>
</comment>
<comment type="similarity">
    <text evidence="1">Belongs to the NAD-dependent DNA ligase family. LigA subfamily.</text>
</comment>
<protein>
    <recommendedName>
        <fullName evidence="1">DNA ligase</fullName>
        <ecNumber evidence="1">6.5.1.2</ecNumber>
    </recommendedName>
    <alternativeName>
        <fullName evidence="1">Polydeoxyribonucleotide synthase [NAD(+)]</fullName>
    </alternativeName>
</protein>
<keyword id="KW-0227">DNA damage</keyword>
<keyword id="KW-0234">DNA repair</keyword>
<keyword id="KW-0235">DNA replication</keyword>
<keyword id="KW-0436">Ligase</keyword>
<keyword id="KW-0460">Magnesium</keyword>
<keyword id="KW-0464">Manganese</keyword>
<keyword id="KW-0479">Metal-binding</keyword>
<keyword id="KW-0520">NAD</keyword>
<keyword id="KW-0862">Zinc</keyword>